<keyword id="KW-1185">Reference proteome</keyword>
<keyword id="KW-0687">Ribonucleoprotein</keyword>
<keyword id="KW-0689">Ribosomal protein</keyword>
<comment type="similarity">
    <text evidence="1">Belongs to the bacterial ribosomal protein bL28 family.</text>
</comment>
<protein>
    <recommendedName>
        <fullName evidence="1">Large ribosomal subunit protein bL28</fullName>
    </recommendedName>
    <alternativeName>
        <fullName evidence="3">50S ribosomal protein L28</fullName>
    </alternativeName>
</protein>
<dbReference type="EMBL" id="CP000282">
    <property type="protein sequence ID" value="ABD82934.1"/>
    <property type="molecule type" value="Genomic_DNA"/>
</dbReference>
<dbReference type="RefSeq" id="WP_011470149.1">
    <property type="nucleotide sequence ID" value="NC_007912.1"/>
</dbReference>
<dbReference type="SMR" id="Q21EE5"/>
<dbReference type="STRING" id="203122.Sde_3679"/>
<dbReference type="GeneID" id="98615289"/>
<dbReference type="KEGG" id="sde:Sde_3679"/>
<dbReference type="eggNOG" id="COG0227">
    <property type="taxonomic scope" value="Bacteria"/>
</dbReference>
<dbReference type="HOGENOM" id="CLU_064548_3_1_6"/>
<dbReference type="OrthoDB" id="9805609at2"/>
<dbReference type="Proteomes" id="UP000001947">
    <property type="component" value="Chromosome"/>
</dbReference>
<dbReference type="GO" id="GO:0022625">
    <property type="term" value="C:cytosolic large ribosomal subunit"/>
    <property type="evidence" value="ECO:0007669"/>
    <property type="project" value="TreeGrafter"/>
</dbReference>
<dbReference type="GO" id="GO:0003735">
    <property type="term" value="F:structural constituent of ribosome"/>
    <property type="evidence" value="ECO:0007669"/>
    <property type="project" value="InterPro"/>
</dbReference>
<dbReference type="GO" id="GO:0006412">
    <property type="term" value="P:translation"/>
    <property type="evidence" value="ECO:0007669"/>
    <property type="project" value="UniProtKB-UniRule"/>
</dbReference>
<dbReference type="FunFam" id="2.30.170.40:FF:000001">
    <property type="entry name" value="50S ribosomal protein L28"/>
    <property type="match status" value="1"/>
</dbReference>
<dbReference type="Gene3D" id="2.30.170.40">
    <property type="entry name" value="Ribosomal protein L28/L24"/>
    <property type="match status" value="1"/>
</dbReference>
<dbReference type="HAMAP" id="MF_00373">
    <property type="entry name" value="Ribosomal_bL28"/>
    <property type="match status" value="1"/>
</dbReference>
<dbReference type="InterPro" id="IPR026569">
    <property type="entry name" value="Ribosomal_bL28"/>
</dbReference>
<dbReference type="InterPro" id="IPR034704">
    <property type="entry name" value="Ribosomal_bL28/bL31-like_sf"/>
</dbReference>
<dbReference type="InterPro" id="IPR001383">
    <property type="entry name" value="Ribosomal_bL28_bact-type"/>
</dbReference>
<dbReference type="InterPro" id="IPR037147">
    <property type="entry name" value="Ribosomal_bL28_sf"/>
</dbReference>
<dbReference type="NCBIfam" id="TIGR00009">
    <property type="entry name" value="L28"/>
    <property type="match status" value="1"/>
</dbReference>
<dbReference type="PANTHER" id="PTHR13528">
    <property type="entry name" value="39S RIBOSOMAL PROTEIN L28, MITOCHONDRIAL"/>
    <property type="match status" value="1"/>
</dbReference>
<dbReference type="PANTHER" id="PTHR13528:SF2">
    <property type="entry name" value="LARGE RIBOSOMAL SUBUNIT PROTEIN BL28M"/>
    <property type="match status" value="1"/>
</dbReference>
<dbReference type="Pfam" id="PF00830">
    <property type="entry name" value="Ribosomal_L28"/>
    <property type="match status" value="1"/>
</dbReference>
<dbReference type="SUPFAM" id="SSF143800">
    <property type="entry name" value="L28p-like"/>
    <property type="match status" value="1"/>
</dbReference>
<gene>
    <name evidence="1" type="primary">rpmB</name>
    <name type="ordered locus">Sde_3679</name>
</gene>
<accession>Q21EE5</accession>
<name>RL28_SACD2</name>
<sequence length="78" mass="9031">MAKVCQVTGKRPVTGHNVSHAKNHTKRRFLPNLHSHRFWVESEKRFVKLRISTKGMRIIDKKGIDTVLAELRARGEKV</sequence>
<reference key="1">
    <citation type="journal article" date="2008" name="PLoS Genet.">
        <title>Complete genome sequence of the complex carbohydrate-degrading marine bacterium, Saccharophagus degradans strain 2-40 T.</title>
        <authorList>
            <person name="Weiner R.M."/>
            <person name="Taylor L.E. II"/>
            <person name="Henrissat B."/>
            <person name="Hauser L."/>
            <person name="Land M."/>
            <person name="Coutinho P.M."/>
            <person name="Rancurel C."/>
            <person name="Saunders E.H."/>
            <person name="Longmire A.G."/>
            <person name="Zhang H."/>
            <person name="Bayer E.A."/>
            <person name="Gilbert H.J."/>
            <person name="Larimer F."/>
            <person name="Zhulin I.B."/>
            <person name="Ekborg N.A."/>
            <person name="Lamed R."/>
            <person name="Richardson P.M."/>
            <person name="Borovok I."/>
            <person name="Hutcheson S."/>
        </authorList>
    </citation>
    <scope>NUCLEOTIDE SEQUENCE [LARGE SCALE GENOMIC DNA]</scope>
    <source>
        <strain>2-40 / ATCC 43961 / DSM 17024</strain>
    </source>
</reference>
<organism>
    <name type="scientific">Saccharophagus degradans (strain 2-40 / ATCC 43961 / DSM 17024)</name>
    <dbReference type="NCBI Taxonomy" id="203122"/>
    <lineage>
        <taxon>Bacteria</taxon>
        <taxon>Pseudomonadati</taxon>
        <taxon>Pseudomonadota</taxon>
        <taxon>Gammaproteobacteria</taxon>
        <taxon>Cellvibrionales</taxon>
        <taxon>Cellvibrionaceae</taxon>
        <taxon>Saccharophagus</taxon>
    </lineage>
</organism>
<feature type="chain" id="PRO_1000007342" description="Large ribosomal subunit protein bL28">
    <location>
        <begin position="1"/>
        <end position="78"/>
    </location>
</feature>
<feature type="region of interest" description="Disordered" evidence="2">
    <location>
        <begin position="1"/>
        <end position="22"/>
    </location>
</feature>
<proteinExistence type="inferred from homology"/>
<evidence type="ECO:0000255" key="1">
    <source>
        <dbReference type="HAMAP-Rule" id="MF_00373"/>
    </source>
</evidence>
<evidence type="ECO:0000256" key="2">
    <source>
        <dbReference type="SAM" id="MobiDB-lite"/>
    </source>
</evidence>
<evidence type="ECO:0000305" key="3"/>